<gene>
    <name evidence="1" type="primary">nfi</name>
    <name type="ordered locus">all4085</name>
</gene>
<accession>Q8YPV5</accession>
<keyword id="KW-0963">Cytoplasm</keyword>
<keyword id="KW-0227">DNA damage</keyword>
<keyword id="KW-0234">DNA repair</keyword>
<keyword id="KW-0255">Endonuclease</keyword>
<keyword id="KW-0378">Hydrolase</keyword>
<keyword id="KW-0460">Magnesium</keyword>
<keyword id="KW-0479">Metal-binding</keyword>
<keyword id="KW-0540">Nuclease</keyword>
<keyword id="KW-1185">Reference proteome</keyword>
<evidence type="ECO:0000255" key="1">
    <source>
        <dbReference type="HAMAP-Rule" id="MF_00801"/>
    </source>
</evidence>
<comment type="function">
    <text evidence="1">DNA repair enzyme involved in the repair of deaminated bases. Selectively cleaves double-stranded DNA at the second phosphodiester bond 3' to a deoxyinosine leaving behind the intact lesion on the nicked DNA.</text>
</comment>
<comment type="catalytic activity">
    <reaction evidence="1">
        <text>Endonucleolytic cleavage at apurinic or apyrimidinic sites to products with a 5'-phosphate.</text>
        <dbReference type="EC" id="3.1.21.7"/>
    </reaction>
</comment>
<comment type="cofactor">
    <cofactor evidence="1">
        <name>Mg(2+)</name>
        <dbReference type="ChEBI" id="CHEBI:18420"/>
    </cofactor>
</comment>
<comment type="subcellular location">
    <subcellularLocation>
        <location evidence="1">Cytoplasm</location>
    </subcellularLocation>
</comment>
<comment type="similarity">
    <text evidence="1">Belongs to the endonuclease V family.</text>
</comment>
<dbReference type="EC" id="3.1.21.7" evidence="1"/>
<dbReference type="EMBL" id="BA000019">
    <property type="protein sequence ID" value="BAB75784.1"/>
    <property type="molecule type" value="Genomic_DNA"/>
</dbReference>
<dbReference type="PIR" id="AF2316">
    <property type="entry name" value="AF2316"/>
</dbReference>
<dbReference type="RefSeq" id="WP_010998225.1">
    <property type="nucleotide sequence ID" value="NZ_RSCN01000057.1"/>
</dbReference>
<dbReference type="SMR" id="Q8YPV5"/>
<dbReference type="STRING" id="103690.gene:10496133"/>
<dbReference type="KEGG" id="ana:all4085"/>
<dbReference type="eggNOG" id="COG1515">
    <property type="taxonomic scope" value="Bacteria"/>
</dbReference>
<dbReference type="OrthoDB" id="9790916at2"/>
<dbReference type="Proteomes" id="UP000002483">
    <property type="component" value="Chromosome"/>
</dbReference>
<dbReference type="GO" id="GO:0005737">
    <property type="term" value="C:cytoplasm"/>
    <property type="evidence" value="ECO:0007669"/>
    <property type="project" value="UniProtKB-SubCell"/>
</dbReference>
<dbReference type="GO" id="GO:0043737">
    <property type="term" value="F:deoxyribonuclease V activity"/>
    <property type="evidence" value="ECO:0007669"/>
    <property type="project" value="UniProtKB-UniRule"/>
</dbReference>
<dbReference type="GO" id="GO:0000287">
    <property type="term" value="F:magnesium ion binding"/>
    <property type="evidence" value="ECO:0007669"/>
    <property type="project" value="UniProtKB-UniRule"/>
</dbReference>
<dbReference type="GO" id="GO:0016891">
    <property type="term" value="F:RNA endonuclease activity, producing 5'-phosphomonoesters"/>
    <property type="evidence" value="ECO:0007669"/>
    <property type="project" value="TreeGrafter"/>
</dbReference>
<dbReference type="GO" id="GO:0003727">
    <property type="term" value="F:single-stranded RNA binding"/>
    <property type="evidence" value="ECO:0007669"/>
    <property type="project" value="TreeGrafter"/>
</dbReference>
<dbReference type="GO" id="GO:0006281">
    <property type="term" value="P:DNA repair"/>
    <property type="evidence" value="ECO:0007669"/>
    <property type="project" value="UniProtKB-UniRule"/>
</dbReference>
<dbReference type="CDD" id="cd06559">
    <property type="entry name" value="Endonuclease_V"/>
    <property type="match status" value="1"/>
</dbReference>
<dbReference type="Gene3D" id="3.30.2170.10">
    <property type="entry name" value="archaeoglobus fulgidus dsm 4304 superfamily"/>
    <property type="match status" value="1"/>
</dbReference>
<dbReference type="HAMAP" id="MF_00801">
    <property type="entry name" value="Endonuclease_5"/>
    <property type="match status" value="1"/>
</dbReference>
<dbReference type="InterPro" id="IPR007581">
    <property type="entry name" value="Endonuclease-V"/>
</dbReference>
<dbReference type="NCBIfam" id="NF008629">
    <property type="entry name" value="PRK11617.1"/>
    <property type="match status" value="1"/>
</dbReference>
<dbReference type="PANTHER" id="PTHR28511">
    <property type="entry name" value="ENDONUCLEASE V"/>
    <property type="match status" value="1"/>
</dbReference>
<dbReference type="PANTHER" id="PTHR28511:SF1">
    <property type="entry name" value="ENDONUCLEASE V"/>
    <property type="match status" value="1"/>
</dbReference>
<dbReference type="Pfam" id="PF04493">
    <property type="entry name" value="Endonuclease_5"/>
    <property type="match status" value="1"/>
</dbReference>
<feature type="chain" id="PRO_0000159655" description="Endonuclease V">
    <location>
        <begin position="1"/>
        <end position="221"/>
    </location>
</feature>
<feature type="binding site" evidence="1">
    <location>
        <position position="44"/>
    </location>
    <ligand>
        <name>Mg(2+)</name>
        <dbReference type="ChEBI" id="CHEBI:18420"/>
    </ligand>
</feature>
<feature type="binding site" evidence="1">
    <location>
        <position position="112"/>
    </location>
    <ligand>
        <name>Mg(2+)</name>
        <dbReference type="ChEBI" id="CHEBI:18420"/>
    </ligand>
</feature>
<feature type="site" description="Interaction with target DNA" evidence="1">
    <location>
        <position position="82"/>
    </location>
</feature>
<sequence length="221" mass="24377">MQIYQPHPWPLTVEEAITIQEELRHQVITEDQFTQPVQYVAGVDMGFEADGTISRAAVAVLSFPDLQVIETNLAYRPTSFPYIPGFLSFREIPAVLDALAKVQTKPDIILCDGQGIAHPRRLGIASHLGVLLNIPTIGVAKSLLIGKHEELADTKGSWQPLIHRGEIIGAVLRTRVGVKPVYVSSGHKISLPTAIDYVLRCTPKYRLPETTRVADKLASNR</sequence>
<name>NFI_NOSS1</name>
<protein>
    <recommendedName>
        <fullName evidence="1">Endonuclease V</fullName>
        <ecNumber evidence="1">3.1.21.7</ecNumber>
    </recommendedName>
    <alternativeName>
        <fullName evidence="1">Deoxyinosine 3'endonuclease</fullName>
    </alternativeName>
    <alternativeName>
        <fullName evidence="1">Deoxyribonuclease V</fullName>
        <shortName evidence="1">DNase V</shortName>
    </alternativeName>
</protein>
<proteinExistence type="inferred from homology"/>
<organism>
    <name type="scientific">Nostoc sp. (strain PCC 7120 / SAG 25.82 / UTEX 2576)</name>
    <dbReference type="NCBI Taxonomy" id="103690"/>
    <lineage>
        <taxon>Bacteria</taxon>
        <taxon>Bacillati</taxon>
        <taxon>Cyanobacteriota</taxon>
        <taxon>Cyanophyceae</taxon>
        <taxon>Nostocales</taxon>
        <taxon>Nostocaceae</taxon>
        <taxon>Nostoc</taxon>
    </lineage>
</organism>
<reference key="1">
    <citation type="journal article" date="2001" name="DNA Res.">
        <title>Complete genomic sequence of the filamentous nitrogen-fixing cyanobacterium Anabaena sp. strain PCC 7120.</title>
        <authorList>
            <person name="Kaneko T."/>
            <person name="Nakamura Y."/>
            <person name="Wolk C.P."/>
            <person name="Kuritz T."/>
            <person name="Sasamoto S."/>
            <person name="Watanabe A."/>
            <person name="Iriguchi M."/>
            <person name="Ishikawa A."/>
            <person name="Kawashima K."/>
            <person name="Kimura T."/>
            <person name="Kishida Y."/>
            <person name="Kohara M."/>
            <person name="Matsumoto M."/>
            <person name="Matsuno A."/>
            <person name="Muraki A."/>
            <person name="Nakazaki N."/>
            <person name="Shimpo S."/>
            <person name="Sugimoto M."/>
            <person name="Takazawa M."/>
            <person name="Yamada M."/>
            <person name="Yasuda M."/>
            <person name="Tabata S."/>
        </authorList>
    </citation>
    <scope>NUCLEOTIDE SEQUENCE [LARGE SCALE GENOMIC DNA]</scope>
    <source>
        <strain>PCC 7120 / SAG 25.82 / UTEX 2576</strain>
    </source>
</reference>